<organism>
    <name type="scientific">Shigella boydii serotype 4 (strain Sb227)</name>
    <dbReference type="NCBI Taxonomy" id="300268"/>
    <lineage>
        <taxon>Bacteria</taxon>
        <taxon>Pseudomonadati</taxon>
        <taxon>Pseudomonadota</taxon>
        <taxon>Gammaproteobacteria</taxon>
        <taxon>Enterobacterales</taxon>
        <taxon>Enterobacteriaceae</taxon>
        <taxon>Shigella</taxon>
    </lineage>
</organism>
<keyword id="KW-0808">Transferase</keyword>
<keyword id="KW-0819">tRNA processing</keyword>
<proteinExistence type="inferred from homology"/>
<comment type="function">
    <text evidence="1">Catalyzes carboxymethyl transfer from carboxy-S-adenosyl-L-methionine (Cx-SAM) to 5-hydroxyuridine (ho5U) to form 5-carboxymethoxyuridine (cmo5U) at position 34 in tRNAs.</text>
</comment>
<comment type="catalytic activity">
    <reaction evidence="1">
        <text>carboxy-S-adenosyl-L-methionine + 5-hydroxyuridine(34) in tRNA = 5-carboxymethoxyuridine(34) in tRNA + S-adenosyl-L-homocysteine + H(+)</text>
        <dbReference type="Rhea" id="RHEA:52848"/>
        <dbReference type="Rhea" id="RHEA-COMP:13381"/>
        <dbReference type="Rhea" id="RHEA-COMP:13383"/>
        <dbReference type="ChEBI" id="CHEBI:15378"/>
        <dbReference type="ChEBI" id="CHEBI:57856"/>
        <dbReference type="ChEBI" id="CHEBI:134278"/>
        <dbReference type="ChEBI" id="CHEBI:136877"/>
        <dbReference type="ChEBI" id="CHEBI:136879"/>
    </reaction>
</comment>
<comment type="subunit">
    <text evidence="1">Homotetramer.</text>
</comment>
<comment type="similarity">
    <text evidence="1">Belongs to the class I-like SAM-binding methyltransferase superfamily. CmoB family.</text>
</comment>
<feature type="chain" id="PRO_0000313975" description="tRNA U34 carboxymethyltransferase">
    <location>
        <begin position="1"/>
        <end position="323"/>
    </location>
</feature>
<feature type="binding site" evidence="1">
    <location>
        <position position="91"/>
    </location>
    <ligand>
        <name>carboxy-S-adenosyl-L-methionine</name>
        <dbReference type="ChEBI" id="CHEBI:134278"/>
    </ligand>
</feature>
<feature type="binding site" evidence="1">
    <location>
        <position position="105"/>
    </location>
    <ligand>
        <name>carboxy-S-adenosyl-L-methionine</name>
        <dbReference type="ChEBI" id="CHEBI:134278"/>
    </ligand>
</feature>
<feature type="binding site" evidence="1">
    <location>
        <position position="110"/>
    </location>
    <ligand>
        <name>carboxy-S-adenosyl-L-methionine</name>
        <dbReference type="ChEBI" id="CHEBI:134278"/>
    </ligand>
</feature>
<feature type="binding site" evidence="1">
    <location>
        <position position="130"/>
    </location>
    <ligand>
        <name>carboxy-S-adenosyl-L-methionine</name>
        <dbReference type="ChEBI" id="CHEBI:134278"/>
    </ligand>
</feature>
<feature type="binding site" evidence="1">
    <location>
        <begin position="152"/>
        <end position="154"/>
    </location>
    <ligand>
        <name>carboxy-S-adenosyl-L-methionine</name>
        <dbReference type="ChEBI" id="CHEBI:134278"/>
    </ligand>
</feature>
<feature type="binding site" evidence="1">
    <location>
        <begin position="181"/>
        <end position="182"/>
    </location>
    <ligand>
        <name>carboxy-S-adenosyl-L-methionine</name>
        <dbReference type="ChEBI" id="CHEBI:134278"/>
    </ligand>
</feature>
<feature type="binding site" evidence="1">
    <location>
        <position position="196"/>
    </location>
    <ligand>
        <name>carboxy-S-adenosyl-L-methionine</name>
        <dbReference type="ChEBI" id="CHEBI:134278"/>
    </ligand>
</feature>
<feature type="binding site" evidence="1">
    <location>
        <position position="200"/>
    </location>
    <ligand>
        <name>carboxy-S-adenosyl-L-methionine</name>
        <dbReference type="ChEBI" id="CHEBI:134278"/>
    </ligand>
</feature>
<feature type="binding site" evidence="1">
    <location>
        <position position="315"/>
    </location>
    <ligand>
        <name>carboxy-S-adenosyl-L-methionine</name>
        <dbReference type="ChEBI" id="CHEBI:134278"/>
    </ligand>
</feature>
<evidence type="ECO:0000255" key="1">
    <source>
        <dbReference type="HAMAP-Rule" id="MF_01590"/>
    </source>
</evidence>
<sequence>MIDFGNFYSLIAKNHLSHWLETLPAQIANWQREQQHGLFKQWSNAVEFLPEIKPYRLDLLHSVTAESEEPLSTGQIKRIETLMRNLMPWRKGPFSLYGVNIDTEWRSDWKWDRVLPHLSDLTGRTILDVGCGSGYHMWRMIGAGAHLAVGIDPTQLFLCQFEAVRKLLGNDQRAHLLPLGIEQLPALKAFDTVFSMGVLYHRRSPLEHLWQLKDQLVNEGELVLETLVIDGDENTVLVPGDRYAQMRNVYFIPSALALKNWLKKCGFVDIRVVDVCVTTTEEQRRTEWMVTESLSDFLDPHDPSKTVEGYPAPKRAVLIARKP</sequence>
<accession>Q322J0</accession>
<protein>
    <recommendedName>
        <fullName evidence="1">tRNA U34 carboxymethyltransferase</fullName>
        <ecNumber evidence="1">2.5.1.-</ecNumber>
    </recommendedName>
</protein>
<reference key="1">
    <citation type="journal article" date="2005" name="Nucleic Acids Res.">
        <title>Genome dynamics and diversity of Shigella species, the etiologic agents of bacillary dysentery.</title>
        <authorList>
            <person name="Yang F."/>
            <person name="Yang J."/>
            <person name="Zhang X."/>
            <person name="Chen L."/>
            <person name="Jiang Y."/>
            <person name="Yan Y."/>
            <person name="Tang X."/>
            <person name="Wang J."/>
            <person name="Xiong Z."/>
            <person name="Dong J."/>
            <person name="Xue Y."/>
            <person name="Zhu Y."/>
            <person name="Xu X."/>
            <person name="Sun L."/>
            <person name="Chen S."/>
            <person name="Nie H."/>
            <person name="Peng J."/>
            <person name="Xu J."/>
            <person name="Wang Y."/>
            <person name="Yuan Z."/>
            <person name="Wen Y."/>
            <person name="Yao Z."/>
            <person name="Shen Y."/>
            <person name="Qiang B."/>
            <person name="Hou Y."/>
            <person name="Yu J."/>
            <person name="Jin Q."/>
        </authorList>
    </citation>
    <scope>NUCLEOTIDE SEQUENCE [LARGE SCALE GENOMIC DNA]</scope>
    <source>
        <strain>Sb227</strain>
    </source>
</reference>
<gene>
    <name evidence="1" type="primary">cmoB</name>
    <name type="ordered locus">SBO_1131</name>
</gene>
<dbReference type="EC" id="2.5.1.-" evidence="1"/>
<dbReference type="EMBL" id="CP000036">
    <property type="protein sequence ID" value="ABB65768.1"/>
    <property type="molecule type" value="Genomic_DNA"/>
</dbReference>
<dbReference type="RefSeq" id="WP_000564746.1">
    <property type="nucleotide sequence ID" value="NC_007613.1"/>
</dbReference>
<dbReference type="SMR" id="Q322J0"/>
<dbReference type="KEGG" id="sbo:SBO_1131"/>
<dbReference type="HOGENOM" id="CLU_052665_0_0_6"/>
<dbReference type="Proteomes" id="UP000007067">
    <property type="component" value="Chromosome"/>
</dbReference>
<dbReference type="GO" id="GO:0016765">
    <property type="term" value="F:transferase activity, transferring alkyl or aryl (other than methyl) groups"/>
    <property type="evidence" value="ECO:0007669"/>
    <property type="project" value="UniProtKB-UniRule"/>
</dbReference>
<dbReference type="GO" id="GO:0002098">
    <property type="term" value="P:tRNA wobble uridine modification"/>
    <property type="evidence" value="ECO:0007669"/>
    <property type="project" value="InterPro"/>
</dbReference>
<dbReference type="CDD" id="cd02440">
    <property type="entry name" value="AdoMet_MTases"/>
    <property type="match status" value="1"/>
</dbReference>
<dbReference type="FunFam" id="3.40.50.150:FF:000080">
    <property type="entry name" value="tRNA U34 carboxymethyltransferase"/>
    <property type="match status" value="1"/>
</dbReference>
<dbReference type="Gene3D" id="3.40.50.150">
    <property type="entry name" value="Vaccinia Virus protein VP39"/>
    <property type="match status" value="1"/>
</dbReference>
<dbReference type="HAMAP" id="MF_01590">
    <property type="entry name" value="tRNA_carboxymethyltr_CmoB"/>
    <property type="match status" value="1"/>
</dbReference>
<dbReference type="InterPro" id="IPR010017">
    <property type="entry name" value="CmoB"/>
</dbReference>
<dbReference type="InterPro" id="IPR027555">
    <property type="entry name" value="Mo5U34_MeTrfas-like"/>
</dbReference>
<dbReference type="InterPro" id="IPR029063">
    <property type="entry name" value="SAM-dependent_MTases_sf"/>
</dbReference>
<dbReference type="NCBIfam" id="NF011650">
    <property type="entry name" value="PRK15068.1"/>
    <property type="match status" value="1"/>
</dbReference>
<dbReference type="NCBIfam" id="TIGR00452">
    <property type="entry name" value="tRNA 5-methoxyuridine(34)/uridine 5-oxyacetic acid(34) synthase CmoB"/>
    <property type="match status" value="1"/>
</dbReference>
<dbReference type="PANTHER" id="PTHR43861:SF3">
    <property type="entry name" value="PUTATIVE (AFU_ORTHOLOGUE AFUA_2G14390)-RELATED"/>
    <property type="match status" value="1"/>
</dbReference>
<dbReference type="PANTHER" id="PTHR43861">
    <property type="entry name" value="TRANS-ACONITATE 2-METHYLTRANSFERASE-RELATED"/>
    <property type="match status" value="1"/>
</dbReference>
<dbReference type="Pfam" id="PF08003">
    <property type="entry name" value="Methyltransf_9"/>
    <property type="match status" value="1"/>
</dbReference>
<dbReference type="SUPFAM" id="SSF53335">
    <property type="entry name" value="S-adenosyl-L-methionine-dependent methyltransferases"/>
    <property type="match status" value="1"/>
</dbReference>
<name>CMOB_SHIBS</name>